<gene>
    <name evidence="1" type="primary">tsf</name>
    <name type="ordered locus">Blon_1057</name>
    <name type="ordered locus">BLIJ_1081</name>
</gene>
<reference key="1">
    <citation type="journal article" date="2008" name="Proc. Natl. Acad. Sci. U.S.A.">
        <title>The genome sequence of Bifidobacterium longum subsp. infantis reveals adaptations for milk utilization within the infant microbiome.</title>
        <authorList>
            <person name="Sela D.A."/>
            <person name="Chapman J."/>
            <person name="Adeuya A."/>
            <person name="Kim J.H."/>
            <person name="Chen F."/>
            <person name="Whitehead T.R."/>
            <person name="Lapidus A."/>
            <person name="Rokhsar D.S."/>
            <person name="Lebrilla C.B."/>
            <person name="German J.B."/>
            <person name="Price N.P."/>
            <person name="Richardson P.M."/>
            <person name="Mills D.A."/>
        </authorList>
    </citation>
    <scope>NUCLEOTIDE SEQUENCE [LARGE SCALE GENOMIC DNA]</scope>
    <source>
        <strain>ATCC 15697 / DSM 20088 / JCM 1222 / NCTC 11817 / S12</strain>
    </source>
</reference>
<reference key="2">
    <citation type="journal article" date="2011" name="Nature">
        <title>Bifidobacteria can protect from enteropathogenic infection through production of acetate.</title>
        <authorList>
            <person name="Fukuda S."/>
            <person name="Toh H."/>
            <person name="Hase K."/>
            <person name="Oshima K."/>
            <person name="Nakanishi Y."/>
            <person name="Yoshimura K."/>
            <person name="Tobe T."/>
            <person name="Clarke J.M."/>
            <person name="Topping D.L."/>
            <person name="Suzuki T."/>
            <person name="Taylor T.D."/>
            <person name="Itoh K."/>
            <person name="Kikuchi J."/>
            <person name="Morita H."/>
            <person name="Hattori M."/>
            <person name="Ohno H."/>
        </authorList>
    </citation>
    <scope>NUCLEOTIDE SEQUENCE [LARGE SCALE GENOMIC DNA]</scope>
    <source>
        <strain>ATCC 15697 / DSM 20088 / JCM 1222 / NCTC 11817 / S12</strain>
    </source>
</reference>
<organism>
    <name type="scientific">Bifidobacterium longum subsp. infantis (strain ATCC 15697 / DSM 20088 / JCM 1222 / NCTC 11817 / S12)</name>
    <dbReference type="NCBI Taxonomy" id="391904"/>
    <lineage>
        <taxon>Bacteria</taxon>
        <taxon>Bacillati</taxon>
        <taxon>Actinomycetota</taxon>
        <taxon>Actinomycetes</taxon>
        <taxon>Bifidobacteriales</taxon>
        <taxon>Bifidobacteriaceae</taxon>
        <taxon>Bifidobacterium</taxon>
    </lineage>
</organism>
<protein>
    <recommendedName>
        <fullName evidence="1">Elongation factor Ts</fullName>
        <shortName evidence="1">EF-Ts</shortName>
    </recommendedName>
</protein>
<name>EFTS_BIFLS</name>
<proteinExistence type="inferred from homology"/>
<keyword id="KW-0963">Cytoplasm</keyword>
<keyword id="KW-0251">Elongation factor</keyword>
<keyword id="KW-0648">Protein biosynthesis</keyword>
<dbReference type="EMBL" id="CP001095">
    <property type="protein sequence ID" value="ACJ52149.1"/>
    <property type="molecule type" value="Genomic_DNA"/>
</dbReference>
<dbReference type="EMBL" id="AP010889">
    <property type="protein sequence ID" value="BAJ68669.1"/>
    <property type="molecule type" value="Genomic_DNA"/>
</dbReference>
<dbReference type="RefSeq" id="WP_012577409.1">
    <property type="nucleotide sequence ID" value="NC_011593.1"/>
</dbReference>
<dbReference type="SMR" id="B7GQR9"/>
<dbReference type="KEGG" id="bln:Blon_1057"/>
<dbReference type="KEGG" id="blon:BLIJ_1081"/>
<dbReference type="PATRIC" id="fig|391904.8.peg.1078"/>
<dbReference type="HOGENOM" id="CLU_047155_0_0_11"/>
<dbReference type="Proteomes" id="UP000001360">
    <property type="component" value="Chromosome"/>
</dbReference>
<dbReference type="GO" id="GO:0005737">
    <property type="term" value="C:cytoplasm"/>
    <property type="evidence" value="ECO:0007669"/>
    <property type="project" value="UniProtKB-SubCell"/>
</dbReference>
<dbReference type="GO" id="GO:0003746">
    <property type="term" value="F:translation elongation factor activity"/>
    <property type="evidence" value="ECO:0007669"/>
    <property type="project" value="UniProtKB-UniRule"/>
</dbReference>
<dbReference type="CDD" id="cd14275">
    <property type="entry name" value="UBA_EF-Ts"/>
    <property type="match status" value="1"/>
</dbReference>
<dbReference type="FunFam" id="1.10.286.20:FF:000001">
    <property type="entry name" value="Elongation factor Ts"/>
    <property type="match status" value="1"/>
</dbReference>
<dbReference type="FunFam" id="1.10.8.10:FF:000001">
    <property type="entry name" value="Elongation factor Ts"/>
    <property type="match status" value="1"/>
</dbReference>
<dbReference type="Gene3D" id="1.10.286.20">
    <property type="match status" value="1"/>
</dbReference>
<dbReference type="Gene3D" id="1.10.8.10">
    <property type="entry name" value="DNA helicase RuvA subunit, C-terminal domain"/>
    <property type="match status" value="1"/>
</dbReference>
<dbReference type="Gene3D" id="3.30.479.20">
    <property type="entry name" value="Elongation factor Ts, dimerisation domain"/>
    <property type="match status" value="2"/>
</dbReference>
<dbReference type="HAMAP" id="MF_00050">
    <property type="entry name" value="EF_Ts"/>
    <property type="match status" value="1"/>
</dbReference>
<dbReference type="InterPro" id="IPR036402">
    <property type="entry name" value="EF-Ts_dimer_sf"/>
</dbReference>
<dbReference type="InterPro" id="IPR001816">
    <property type="entry name" value="Transl_elong_EFTs/EF1B"/>
</dbReference>
<dbReference type="InterPro" id="IPR014039">
    <property type="entry name" value="Transl_elong_EFTs/EF1B_dimer"/>
</dbReference>
<dbReference type="InterPro" id="IPR018101">
    <property type="entry name" value="Transl_elong_Ts_CS"/>
</dbReference>
<dbReference type="InterPro" id="IPR009060">
    <property type="entry name" value="UBA-like_sf"/>
</dbReference>
<dbReference type="NCBIfam" id="TIGR00116">
    <property type="entry name" value="tsf"/>
    <property type="match status" value="1"/>
</dbReference>
<dbReference type="PANTHER" id="PTHR11741">
    <property type="entry name" value="ELONGATION FACTOR TS"/>
    <property type="match status" value="1"/>
</dbReference>
<dbReference type="PANTHER" id="PTHR11741:SF0">
    <property type="entry name" value="ELONGATION FACTOR TS, MITOCHONDRIAL"/>
    <property type="match status" value="1"/>
</dbReference>
<dbReference type="Pfam" id="PF00889">
    <property type="entry name" value="EF_TS"/>
    <property type="match status" value="1"/>
</dbReference>
<dbReference type="SUPFAM" id="SSF54713">
    <property type="entry name" value="Elongation factor Ts (EF-Ts), dimerisation domain"/>
    <property type="match status" value="1"/>
</dbReference>
<dbReference type="SUPFAM" id="SSF46934">
    <property type="entry name" value="UBA-like"/>
    <property type="match status" value="1"/>
</dbReference>
<dbReference type="PROSITE" id="PS01127">
    <property type="entry name" value="EF_TS_2"/>
    <property type="match status" value="1"/>
</dbReference>
<accession>B7GQR9</accession>
<accession>E8MJE2</accession>
<sequence>MAAITAALIKQVREDTGAGMLDVKKALTEAEGDVARAKEIIRAKGIAAAGKREGRKAQEGTIASKVVETANGETGYAVELNSETDFVAKTPKFVEFSEEVLGYAVDAEANSADELLEAKAGDSTVKLAVEEAAALFGEHVKVGQFAKISGEHVEVYAHKKSAEMPPSIVAMIATDKAGAAVAHEAALQISAMGAKWLTREDVPADVVESERRVATEKSLAEGKPEKIVPKIVEGRLNAFFKEVVLLEQPFVKDPSKTVGDLFKEVGGAATAFARVEVGKGEEE</sequence>
<feature type="chain" id="PRO_1000189862" description="Elongation factor Ts">
    <location>
        <begin position="1"/>
        <end position="283"/>
    </location>
</feature>
<feature type="region of interest" description="Involved in Mg(2+) ion dislocation from EF-Tu" evidence="1">
    <location>
        <begin position="84"/>
        <end position="87"/>
    </location>
</feature>
<comment type="function">
    <text evidence="1">Associates with the EF-Tu.GDP complex and induces the exchange of GDP to GTP. It remains bound to the aminoacyl-tRNA.EF-Tu.GTP complex up to the GTP hydrolysis stage on the ribosome.</text>
</comment>
<comment type="subcellular location">
    <subcellularLocation>
        <location evidence="1">Cytoplasm</location>
    </subcellularLocation>
</comment>
<comment type="similarity">
    <text evidence="1">Belongs to the EF-Ts family.</text>
</comment>
<evidence type="ECO:0000255" key="1">
    <source>
        <dbReference type="HAMAP-Rule" id="MF_00050"/>
    </source>
</evidence>